<name>NRDR_PROM4</name>
<comment type="function">
    <text evidence="1">Negatively regulates transcription of bacterial ribonucleotide reductase nrd genes and operons by binding to NrdR-boxes.</text>
</comment>
<comment type="cofactor">
    <cofactor evidence="1">
        <name>Zn(2+)</name>
        <dbReference type="ChEBI" id="CHEBI:29105"/>
    </cofactor>
    <text evidence="1">Binds 1 zinc ion.</text>
</comment>
<comment type="similarity">
    <text evidence="1">Belongs to the NrdR family.</text>
</comment>
<reference key="1">
    <citation type="journal article" date="2007" name="PLoS Genet.">
        <title>Patterns and implications of gene gain and loss in the evolution of Prochlorococcus.</title>
        <authorList>
            <person name="Kettler G.C."/>
            <person name="Martiny A.C."/>
            <person name="Huang K."/>
            <person name="Zucker J."/>
            <person name="Coleman M.L."/>
            <person name="Rodrigue S."/>
            <person name="Chen F."/>
            <person name="Lapidus A."/>
            <person name="Ferriera S."/>
            <person name="Johnson J."/>
            <person name="Steglich C."/>
            <person name="Church G.M."/>
            <person name="Richardson P."/>
            <person name="Chisholm S.W."/>
        </authorList>
    </citation>
    <scope>NUCLEOTIDE SEQUENCE [LARGE SCALE GENOMIC DNA]</scope>
    <source>
        <strain>MIT 9211</strain>
    </source>
</reference>
<feature type="chain" id="PRO_1000124531" description="Transcriptional repressor NrdR">
    <location>
        <begin position="1"/>
        <end position="157"/>
    </location>
</feature>
<feature type="domain" description="ATP-cone" evidence="1">
    <location>
        <begin position="49"/>
        <end position="139"/>
    </location>
</feature>
<feature type="zinc finger region" evidence="1">
    <location>
        <begin position="3"/>
        <end position="34"/>
    </location>
</feature>
<feature type="region of interest" description="Disordered" evidence="2">
    <location>
        <begin position="1"/>
        <end position="21"/>
    </location>
</feature>
<feature type="compositionally biased region" description="Polar residues" evidence="2">
    <location>
        <begin position="1"/>
        <end position="11"/>
    </location>
</feature>
<evidence type="ECO:0000255" key="1">
    <source>
        <dbReference type="HAMAP-Rule" id="MF_00440"/>
    </source>
</evidence>
<evidence type="ECO:0000256" key="2">
    <source>
        <dbReference type="SAM" id="MobiDB-lite"/>
    </source>
</evidence>
<gene>
    <name evidence="1" type="primary">nrdR</name>
    <name type="ordered locus">P9211_03481</name>
</gene>
<protein>
    <recommendedName>
        <fullName evidence="1">Transcriptional repressor NrdR</fullName>
    </recommendedName>
</protein>
<proteinExistence type="inferred from homology"/>
<dbReference type="EMBL" id="CP000878">
    <property type="protein sequence ID" value="ABX08279.1"/>
    <property type="molecule type" value="Genomic_DNA"/>
</dbReference>
<dbReference type="RefSeq" id="WP_012194903.1">
    <property type="nucleotide sequence ID" value="NC_009976.1"/>
</dbReference>
<dbReference type="SMR" id="A9BDW9"/>
<dbReference type="STRING" id="93059.P9211_03481"/>
<dbReference type="KEGG" id="pmj:P9211_03481"/>
<dbReference type="eggNOG" id="COG1327">
    <property type="taxonomic scope" value="Bacteria"/>
</dbReference>
<dbReference type="HOGENOM" id="CLU_108412_0_0_3"/>
<dbReference type="OrthoDB" id="9807461at2"/>
<dbReference type="Proteomes" id="UP000000788">
    <property type="component" value="Chromosome"/>
</dbReference>
<dbReference type="GO" id="GO:0005524">
    <property type="term" value="F:ATP binding"/>
    <property type="evidence" value="ECO:0007669"/>
    <property type="project" value="UniProtKB-KW"/>
</dbReference>
<dbReference type="GO" id="GO:0003677">
    <property type="term" value="F:DNA binding"/>
    <property type="evidence" value="ECO:0007669"/>
    <property type="project" value="UniProtKB-KW"/>
</dbReference>
<dbReference type="GO" id="GO:0008270">
    <property type="term" value="F:zinc ion binding"/>
    <property type="evidence" value="ECO:0007669"/>
    <property type="project" value="UniProtKB-UniRule"/>
</dbReference>
<dbReference type="GO" id="GO:0045892">
    <property type="term" value="P:negative regulation of DNA-templated transcription"/>
    <property type="evidence" value="ECO:0007669"/>
    <property type="project" value="UniProtKB-UniRule"/>
</dbReference>
<dbReference type="HAMAP" id="MF_00440">
    <property type="entry name" value="NrdR"/>
    <property type="match status" value="1"/>
</dbReference>
<dbReference type="InterPro" id="IPR005144">
    <property type="entry name" value="ATP-cone_dom"/>
</dbReference>
<dbReference type="InterPro" id="IPR055173">
    <property type="entry name" value="NrdR-like_N"/>
</dbReference>
<dbReference type="InterPro" id="IPR003796">
    <property type="entry name" value="RNR_NrdR-like"/>
</dbReference>
<dbReference type="NCBIfam" id="TIGR00244">
    <property type="entry name" value="transcriptional regulator NrdR"/>
    <property type="match status" value="1"/>
</dbReference>
<dbReference type="PANTHER" id="PTHR30455">
    <property type="entry name" value="TRANSCRIPTIONAL REPRESSOR NRDR"/>
    <property type="match status" value="1"/>
</dbReference>
<dbReference type="PANTHER" id="PTHR30455:SF2">
    <property type="entry name" value="TRANSCRIPTIONAL REPRESSOR NRDR"/>
    <property type="match status" value="1"/>
</dbReference>
<dbReference type="Pfam" id="PF03477">
    <property type="entry name" value="ATP-cone"/>
    <property type="match status" value="1"/>
</dbReference>
<dbReference type="Pfam" id="PF22811">
    <property type="entry name" value="Zn_ribbon_NrdR"/>
    <property type="match status" value="1"/>
</dbReference>
<dbReference type="PROSITE" id="PS51161">
    <property type="entry name" value="ATP_CONE"/>
    <property type="match status" value="1"/>
</dbReference>
<organism>
    <name type="scientific">Prochlorococcus marinus (strain MIT 9211)</name>
    <dbReference type="NCBI Taxonomy" id="93059"/>
    <lineage>
        <taxon>Bacteria</taxon>
        <taxon>Bacillati</taxon>
        <taxon>Cyanobacteriota</taxon>
        <taxon>Cyanophyceae</taxon>
        <taxon>Synechococcales</taxon>
        <taxon>Prochlorococcaceae</taxon>
        <taxon>Prochlorococcus</taxon>
    </lineage>
</organism>
<sequence length="157" mass="18028">MQCPSCQNTDSRVLESRSADTGKSVRRRRECLNCDFRFTTYERVETVPITVIKRSESKETFSRSKLLNGLIRACEKTCIDNQKIESIVDEIEIQLQQRNMKEVSSSDLGEMVLGQLKGLSEVAYIRFASVYRQFNGINDFVETLETFKPDKKLATVI</sequence>
<keyword id="KW-0067">ATP-binding</keyword>
<keyword id="KW-0238">DNA-binding</keyword>
<keyword id="KW-0479">Metal-binding</keyword>
<keyword id="KW-0547">Nucleotide-binding</keyword>
<keyword id="KW-1185">Reference proteome</keyword>
<keyword id="KW-0678">Repressor</keyword>
<keyword id="KW-0804">Transcription</keyword>
<keyword id="KW-0805">Transcription regulation</keyword>
<keyword id="KW-0862">Zinc</keyword>
<keyword id="KW-0863">Zinc-finger</keyword>
<accession>A9BDW9</accession>